<gene>
    <name evidence="1" type="primary">mscL</name>
    <name type="ordered locus">Bamb_1938</name>
</gene>
<proteinExistence type="inferred from homology"/>
<comment type="function">
    <text evidence="1">Channel that opens in response to stretch forces in the membrane lipid bilayer. May participate in the regulation of osmotic pressure changes within the cell.</text>
</comment>
<comment type="subunit">
    <text evidence="1">Homopentamer.</text>
</comment>
<comment type="subcellular location">
    <subcellularLocation>
        <location evidence="1">Cell inner membrane</location>
        <topology evidence="1">Multi-pass membrane protein</topology>
    </subcellularLocation>
</comment>
<comment type="similarity">
    <text evidence="1">Belongs to the MscL family.</text>
</comment>
<organism>
    <name type="scientific">Burkholderia ambifaria (strain ATCC BAA-244 / DSM 16087 / CCUG 44356 / LMG 19182 / AMMD)</name>
    <name type="common">Burkholderia cepacia (strain AMMD)</name>
    <dbReference type="NCBI Taxonomy" id="339670"/>
    <lineage>
        <taxon>Bacteria</taxon>
        <taxon>Pseudomonadati</taxon>
        <taxon>Pseudomonadota</taxon>
        <taxon>Betaproteobacteria</taxon>
        <taxon>Burkholderiales</taxon>
        <taxon>Burkholderiaceae</taxon>
        <taxon>Burkholderia</taxon>
        <taxon>Burkholderia cepacia complex</taxon>
    </lineage>
</organism>
<reference key="1">
    <citation type="submission" date="2006-08" db="EMBL/GenBank/DDBJ databases">
        <title>Complete sequence of chromosome 1 of Burkholderia cepacia AMMD.</title>
        <authorList>
            <person name="Copeland A."/>
            <person name="Lucas S."/>
            <person name="Lapidus A."/>
            <person name="Barry K."/>
            <person name="Detter J.C."/>
            <person name="Glavina del Rio T."/>
            <person name="Hammon N."/>
            <person name="Israni S."/>
            <person name="Pitluck S."/>
            <person name="Bruce D."/>
            <person name="Chain P."/>
            <person name="Malfatti S."/>
            <person name="Shin M."/>
            <person name="Vergez L."/>
            <person name="Schmutz J."/>
            <person name="Larimer F."/>
            <person name="Land M."/>
            <person name="Hauser L."/>
            <person name="Kyrpides N."/>
            <person name="Kim E."/>
            <person name="Parke J."/>
            <person name="Coenye T."/>
            <person name="Konstantinidis K."/>
            <person name="Ramette A."/>
            <person name="Tiedje J."/>
            <person name="Richardson P."/>
        </authorList>
    </citation>
    <scope>NUCLEOTIDE SEQUENCE [LARGE SCALE GENOMIC DNA]</scope>
    <source>
        <strain>ATCC BAA-244 / DSM 16087 / CCUG 44356 / LMG 19182 / AMMD</strain>
    </source>
</reference>
<sequence length="143" mass="15476">MSIIKEFKEFAVKGNVMDLAVGVIIGGAFSKIVDSVVKDLIMPVIGVLTGGLDFSNKFVLLGTIPPTFKGNPDSFKDLQAAGVAAFGYGSFITVAINFVILAFIIFLMVKFINKLRKPEEAAPAATPEDIVLLREIRDSLKQR</sequence>
<feature type="chain" id="PRO_1000015359" description="Large-conductance mechanosensitive channel">
    <location>
        <begin position="1"/>
        <end position="143"/>
    </location>
</feature>
<feature type="transmembrane region" description="Helical" evidence="1">
    <location>
        <begin position="10"/>
        <end position="30"/>
    </location>
</feature>
<feature type="transmembrane region" description="Helical" evidence="1">
    <location>
        <begin position="89"/>
        <end position="109"/>
    </location>
</feature>
<name>MSCL_BURCM</name>
<evidence type="ECO:0000255" key="1">
    <source>
        <dbReference type="HAMAP-Rule" id="MF_00115"/>
    </source>
</evidence>
<protein>
    <recommendedName>
        <fullName evidence="1">Large-conductance mechanosensitive channel</fullName>
    </recommendedName>
</protein>
<accession>Q0BEC9</accession>
<dbReference type="EMBL" id="CP000440">
    <property type="protein sequence ID" value="ABI87494.1"/>
    <property type="molecule type" value="Genomic_DNA"/>
</dbReference>
<dbReference type="RefSeq" id="WP_006760677.1">
    <property type="nucleotide sequence ID" value="NZ_CP009798.1"/>
</dbReference>
<dbReference type="GeneID" id="93085859"/>
<dbReference type="KEGG" id="bam:Bamb_1938"/>
<dbReference type="PATRIC" id="fig|339670.21.peg.3008"/>
<dbReference type="eggNOG" id="COG1970">
    <property type="taxonomic scope" value="Bacteria"/>
</dbReference>
<dbReference type="Proteomes" id="UP000000662">
    <property type="component" value="Chromosome 1"/>
</dbReference>
<dbReference type="GO" id="GO:0005886">
    <property type="term" value="C:plasma membrane"/>
    <property type="evidence" value="ECO:0007669"/>
    <property type="project" value="UniProtKB-SubCell"/>
</dbReference>
<dbReference type="GO" id="GO:0008381">
    <property type="term" value="F:mechanosensitive monoatomic ion channel activity"/>
    <property type="evidence" value="ECO:0007669"/>
    <property type="project" value="UniProtKB-UniRule"/>
</dbReference>
<dbReference type="Gene3D" id="1.10.1200.120">
    <property type="entry name" value="Large-conductance mechanosensitive channel, MscL, domain 1"/>
    <property type="match status" value="1"/>
</dbReference>
<dbReference type="HAMAP" id="MF_00115">
    <property type="entry name" value="MscL"/>
    <property type="match status" value="1"/>
</dbReference>
<dbReference type="InterPro" id="IPR019823">
    <property type="entry name" value="Mechanosensitive_channel_CS"/>
</dbReference>
<dbReference type="InterPro" id="IPR001185">
    <property type="entry name" value="MS_channel"/>
</dbReference>
<dbReference type="InterPro" id="IPR037673">
    <property type="entry name" value="MSC/AndL"/>
</dbReference>
<dbReference type="InterPro" id="IPR036019">
    <property type="entry name" value="MscL_channel"/>
</dbReference>
<dbReference type="NCBIfam" id="TIGR00220">
    <property type="entry name" value="mscL"/>
    <property type="match status" value="1"/>
</dbReference>
<dbReference type="NCBIfam" id="NF001843">
    <property type="entry name" value="PRK00567.1-4"/>
    <property type="match status" value="1"/>
</dbReference>
<dbReference type="NCBIfam" id="NF010557">
    <property type="entry name" value="PRK13952.1"/>
    <property type="match status" value="1"/>
</dbReference>
<dbReference type="PANTHER" id="PTHR30266:SF2">
    <property type="entry name" value="LARGE-CONDUCTANCE MECHANOSENSITIVE CHANNEL"/>
    <property type="match status" value="1"/>
</dbReference>
<dbReference type="PANTHER" id="PTHR30266">
    <property type="entry name" value="MECHANOSENSITIVE CHANNEL MSCL"/>
    <property type="match status" value="1"/>
</dbReference>
<dbReference type="Pfam" id="PF01741">
    <property type="entry name" value="MscL"/>
    <property type="match status" value="1"/>
</dbReference>
<dbReference type="PRINTS" id="PR01264">
    <property type="entry name" value="MECHCHANNEL"/>
</dbReference>
<dbReference type="SUPFAM" id="SSF81330">
    <property type="entry name" value="Gated mechanosensitive channel"/>
    <property type="match status" value="1"/>
</dbReference>
<dbReference type="PROSITE" id="PS01327">
    <property type="entry name" value="MSCL"/>
    <property type="match status" value="1"/>
</dbReference>
<keyword id="KW-0997">Cell inner membrane</keyword>
<keyword id="KW-1003">Cell membrane</keyword>
<keyword id="KW-0407">Ion channel</keyword>
<keyword id="KW-0406">Ion transport</keyword>
<keyword id="KW-0472">Membrane</keyword>
<keyword id="KW-0812">Transmembrane</keyword>
<keyword id="KW-1133">Transmembrane helix</keyword>
<keyword id="KW-0813">Transport</keyword>